<sequence>MNIVLASSSPSRLSILRSAGVEPLVCPADVDEDALLDSLVGRSPADKVAALAQAKAEAIAGDYPDDVVIGGDSMLLLDGALQGKPHTVDKTIERWKQQRGKTAELITGHCVITPRGRHVETSTTTVTFAHADDADIEAYARTGEPLQCAGAFTLEAIGGWFIDSITGDPSSVIGLSLPVVRRALYAAGYNVSEFWNNN</sequence>
<comment type="function">
    <text evidence="1">Nucleoside triphosphate pyrophosphatase. May have a dual role in cell division arrest and in preventing the incorporation of modified nucleotides into cellular nucleic acids.</text>
</comment>
<comment type="catalytic activity">
    <reaction evidence="1">
        <text>a ribonucleoside 5'-triphosphate + H2O = a ribonucleoside 5'-phosphate + diphosphate + H(+)</text>
        <dbReference type="Rhea" id="RHEA:23996"/>
        <dbReference type="ChEBI" id="CHEBI:15377"/>
        <dbReference type="ChEBI" id="CHEBI:15378"/>
        <dbReference type="ChEBI" id="CHEBI:33019"/>
        <dbReference type="ChEBI" id="CHEBI:58043"/>
        <dbReference type="ChEBI" id="CHEBI:61557"/>
        <dbReference type="EC" id="3.6.1.9"/>
    </reaction>
</comment>
<comment type="catalytic activity">
    <reaction evidence="1">
        <text>a 2'-deoxyribonucleoside 5'-triphosphate + H2O = a 2'-deoxyribonucleoside 5'-phosphate + diphosphate + H(+)</text>
        <dbReference type="Rhea" id="RHEA:44644"/>
        <dbReference type="ChEBI" id="CHEBI:15377"/>
        <dbReference type="ChEBI" id="CHEBI:15378"/>
        <dbReference type="ChEBI" id="CHEBI:33019"/>
        <dbReference type="ChEBI" id="CHEBI:61560"/>
        <dbReference type="ChEBI" id="CHEBI:65317"/>
        <dbReference type="EC" id="3.6.1.9"/>
    </reaction>
</comment>
<comment type="cofactor">
    <cofactor evidence="1">
        <name>a divalent metal cation</name>
        <dbReference type="ChEBI" id="CHEBI:60240"/>
    </cofactor>
</comment>
<comment type="subcellular location">
    <subcellularLocation>
        <location evidence="1">Cytoplasm</location>
    </subcellularLocation>
</comment>
<comment type="similarity">
    <text evidence="1">Belongs to the Maf family.</text>
</comment>
<organism>
    <name type="scientific">Corynebacterium diphtheriae (strain ATCC 700971 / NCTC 13129 / Biotype gravis)</name>
    <dbReference type="NCBI Taxonomy" id="257309"/>
    <lineage>
        <taxon>Bacteria</taxon>
        <taxon>Bacillati</taxon>
        <taxon>Actinomycetota</taxon>
        <taxon>Actinomycetes</taxon>
        <taxon>Mycobacteriales</taxon>
        <taxon>Corynebacteriaceae</taxon>
        <taxon>Corynebacterium</taxon>
    </lineage>
</organism>
<keyword id="KW-0963">Cytoplasm</keyword>
<keyword id="KW-0378">Hydrolase</keyword>
<keyword id="KW-0546">Nucleotide metabolism</keyword>
<keyword id="KW-1185">Reference proteome</keyword>
<gene>
    <name type="ordered locus">DIP0654</name>
</gene>
<accession>Q6NIW2</accession>
<dbReference type="EC" id="3.6.1.9" evidence="1"/>
<dbReference type="EMBL" id="BX248355">
    <property type="protein sequence ID" value="CAE49171.1"/>
    <property type="molecule type" value="Genomic_DNA"/>
</dbReference>
<dbReference type="RefSeq" id="WP_010934455.1">
    <property type="nucleotide sequence ID" value="NC_002935.2"/>
</dbReference>
<dbReference type="SMR" id="Q6NIW2"/>
<dbReference type="STRING" id="257309.DIP0654"/>
<dbReference type="KEGG" id="cdi:DIP0654"/>
<dbReference type="HOGENOM" id="CLU_040416_1_2_11"/>
<dbReference type="Proteomes" id="UP000002198">
    <property type="component" value="Chromosome"/>
</dbReference>
<dbReference type="GO" id="GO:0005737">
    <property type="term" value="C:cytoplasm"/>
    <property type="evidence" value="ECO:0007669"/>
    <property type="project" value="UniProtKB-SubCell"/>
</dbReference>
<dbReference type="GO" id="GO:0047429">
    <property type="term" value="F:nucleoside triphosphate diphosphatase activity"/>
    <property type="evidence" value="ECO:0007669"/>
    <property type="project" value="UniProtKB-EC"/>
</dbReference>
<dbReference type="GO" id="GO:0009117">
    <property type="term" value="P:nucleotide metabolic process"/>
    <property type="evidence" value="ECO:0007669"/>
    <property type="project" value="UniProtKB-KW"/>
</dbReference>
<dbReference type="CDD" id="cd00555">
    <property type="entry name" value="Maf"/>
    <property type="match status" value="1"/>
</dbReference>
<dbReference type="Gene3D" id="3.90.950.10">
    <property type="match status" value="1"/>
</dbReference>
<dbReference type="HAMAP" id="MF_00528">
    <property type="entry name" value="Maf"/>
    <property type="match status" value="1"/>
</dbReference>
<dbReference type="InterPro" id="IPR029001">
    <property type="entry name" value="ITPase-like_fam"/>
</dbReference>
<dbReference type="InterPro" id="IPR003697">
    <property type="entry name" value="Maf-like"/>
</dbReference>
<dbReference type="NCBIfam" id="TIGR00172">
    <property type="entry name" value="maf"/>
    <property type="match status" value="1"/>
</dbReference>
<dbReference type="PANTHER" id="PTHR43213">
    <property type="entry name" value="BIFUNCTIONAL DTTP/UTP PYROPHOSPHATASE/METHYLTRANSFERASE PROTEIN-RELATED"/>
    <property type="match status" value="1"/>
</dbReference>
<dbReference type="PANTHER" id="PTHR43213:SF5">
    <property type="entry name" value="BIFUNCTIONAL DTTP_UTP PYROPHOSPHATASE_METHYLTRANSFERASE PROTEIN-RELATED"/>
    <property type="match status" value="1"/>
</dbReference>
<dbReference type="Pfam" id="PF02545">
    <property type="entry name" value="Maf"/>
    <property type="match status" value="1"/>
</dbReference>
<dbReference type="PIRSF" id="PIRSF006305">
    <property type="entry name" value="Maf"/>
    <property type="match status" value="1"/>
</dbReference>
<dbReference type="SUPFAM" id="SSF52972">
    <property type="entry name" value="ITPase-like"/>
    <property type="match status" value="1"/>
</dbReference>
<feature type="chain" id="PRO_0000267290" description="Nucleoside triphosphate pyrophosphatase">
    <location>
        <begin position="1"/>
        <end position="198"/>
    </location>
</feature>
<feature type="active site" description="Proton acceptor" evidence="1">
    <location>
        <position position="72"/>
    </location>
</feature>
<evidence type="ECO:0000255" key="1">
    <source>
        <dbReference type="HAMAP-Rule" id="MF_00528"/>
    </source>
</evidence>
<protein>
    <recommendedName>
        <fullName evidence="1">Nucleoside triphosphate pyrophosphatase</fullName>
        <ecNumber evidence="1">3.6.1.9</ecNumber>
    </recommendedName>
    <alternativeName>
        <fullName evidence="1">Nucleotide pyrophosphatase</fullName>
        <shortName evidence="1">Nucleotide PPase</shortName>
    </alternativeName>
</protein>
<proteinExistence type="inferred from homology"/>
<name>NTPP_CORDI</name>
<reference key="1">
    <citation type="journal article" date="2003" name="Nucleic Acids Res.">
        <title>The complete genome sequence and analysis of Corynebacterium diphtheriae NCTC13129.</title>
        <authorList>
            <person name="Cerdeno-Tarraga A.-M."/>
            <person name="Efstratiou A."/>
            <person name="Dover L.G."/>
            <person name="Holden M.T.G."/>
            <person name="Pallen M.J."/>
            <person name="Bentley S.D."/>
            <person name="Besra G.S."/>
            <person name="Churcher C.M."/>
            <person name="James K.D."/>
            <person name="De Zoysa A."/>
            <person name="Chillingworth T."/>
            <person name="Cronin A."/>
            <person name="Dowd L."/>
            <person name="Feltwell T."/>
            <person name="Hamlin N."/>
            <person name="Holroyd S."/>
            <person name="Jagels K."/>
            <person name="Moule S."/>
            <person name="Quail M.A."/>
            <person name="Rabbinowitsch E."/>
            <person name="Rutherford K.M."/>
            <person name="Thomson N.R."/>
            <person name="Unwin L."/>
            <person name="Whitehead S."/>
            <person name="Barrell B.G."/>
            <person name="Parkhill J."/>
        </authorList>
    </citation>
    <scope>NUCLEOTIDE SEQUENCE [LARGE SCALE GENOMIC DNA]</scope>
    <source>
        <strain>ATCC 700971 / NCTC 13129 / Biotype gravis</strain>
    </source>
</reference>